<protein>
    <recommendedName>
        <fullName evidence="1">o-succinylbenzoate synthase</fullName>
        <shortName evidence="1">OSB synthase</shortName>
        <shortName evidence="1">OSBS</shortName>
        <ecNumber evidence="1">4.2.1.113</ecNumber>
    </recommendedName>
    <alternativeName>
        <fullName evidence="1">4-(2'-carboxyphenyl)-4-oxybutyric acid synthase</fullName>
    </alternativeName>
    <alternativeName>
        <fullName evidence="1">o-succinylbenzoic acid synthase</fullName>
    </alternativeName>
</protein>
<gene>
    <name evidence="1" type="primary">menC</name>
    <name type="ordered locus">JTY_0568</name>
</gene>
<evidence type="ECO:0000255" key="1">
    <source>
        <dbReference type="HAMAP-Rule" id="MF_00470"/>
    </source>
</evidence>
<reference key="1">
    <citation type="journal article" date="2009" name="Vaccine">
        <title>Whole genome sequence analysis of Mycobacterium bovis bacillus Calmette-Guerin (BCG) Tokyo 172: a comparative study of BCG vaccine substrains.</title>
        <authorList>
            <person name="Seki M."/>
            <person name="Honda I."/>
            <person name="Fujita I."/>
            <person name="Yano I."/>
            <person name="Yamamoto S."/>
            <person name="Koyama A."/>
        </authorList>
    </citation>
    <scope>NUCLEOTIDE SEQUENCE [LARGE SCALE GENOMIC DNA]</scope>
    <source>
        <strain>BCG / Tokyo 172 / ATCC 35737 / TMC 1019</strain>
    </source>
</reference>
<feature type="chain" id="PRO_1000135487" description="o-succinylbenzoate synthase">
    <location>
        <begin position="1"/>
        <end position="326"/>
    </location>
</feature>
<feature type="active site" description="Proton donor" evidence="1">
    <location>
        <position position="110"/>
    </location>
</feature>
<feature type="active site" description="Proton acceptor" evidence="1">
    <location>
        <position position="212"/>
    </location>
</feature>
<feature type="binding site" evidence="1">
    <location>
        <position position="138"/>
    </location>
    <ligand>
        <name>Mg(2+)</name>
        <dbReference type="ChEBI" id="CHEBI:18420"/>
    </ligand>
</feature>
<feature type="binding site" evidence="1">
    <location>
        <position position="165"/>
    </location>
    <ligand>
        <name>Mg(2+)</name>
        <dbReference type="ChEBI" id="CHEBI:18420"/>
    </ligand>
</feature>
<feature type="binding site" evidence="1">
    <location>
        <position position="188"/>
    </location>
    <ligand>
        <name>Mg(2+)</name>
        <dbReference type="ChEBI" id="CHEBI:18420"/>
    </ligand>
</feature>
<accession>C1AKN3</accession>
<comment type="function">
    <text evidence="1">Converts 2-succinyl-6-hydroxy-2,4-cyclohexadiene-1-carboxylate (SHCHC) to 2-succinylbenzoate (OSB).</text>
</comment>
<comment type="catalytic activity">
    <reaction evidence="1">
        <text>(1R,6R)-6-hydroxy-2-succinyl-cyclohexa-2,4-diene-1-carboxylate = 2-succinylbenzoate + H2O</text>
        <dbReference type="Rhea" id="RHEA:10196"/>
        <dbReference type="ChEBI" id="CHEBI:15377"/>
        <dbReference type="ChEBI" id="CHEBI:18325"/>
        <dbReference type="ChEBI" id="CHEBI:58689"/>
        <dbReference type="EC" id="4.2.1.113"/>
    </reaction>
</comment>
<comment type="cofactor">
    <cofactor evidence="1">
        <name>a divalent metal cation</name>
        <dbReference type="ChEBI" id="CHEBI:60240"/>
    </cofactor>
</comment>
<comment type="pathway">
    <text evidence="1">Quinol/quinone metabolism; 1,4-dihydroxy-2-naphthoate biosynthesis; 1,4-dihydroxy-2-naphthoate from chorismate: step 4/7.</text>
</comment>
<comment type="pathway">
    <text evidence="1">Quinol/quinone metabolism; menaquinone biosynthesis.</text>
</comment>
<comment type="similarity">
    <text evidence="1">Belongs to the mandelate racemase/muconate lactonizing enzyme family. MenC type 1 subfamily.</text>
</comment>
<keyword id="KW-0456">Lyase</keyword>
<keyword id="KW-0460">Magnesium</keyword>
<keyword id="KW-0474">Menaquinone biosynthesis</keyword>
<keyword id="KW-0479">Metal-binding</keyword>
<dbReference type="EC" id="4.2.1.113" evidence="1"/>
<dbReference type="EMBL" id="AP010918">
    <property type="protein sequence ID" value="BAH24862.1"/>
    <property type="molecule type" value="Genomic_DNA"/>
</dbReference>
<dbReference type="RefSeq" id="WP_003402923.1">
    <property type="nucleotide sequence ID" value="NZ_CP014566.1"/>
</dbReference>
<dbReference type="SMR" id="C1AKN3"/>
<dbReference type="KEGG" id="mbt:JTY_0568"/>
<dbReference type="HOGENOM" id="CLU_057696_0_0_11"/>
<dbReference type="UniPathway" id="UPA00079"/>
<dbReference type="UniPathway" id="UPA01057">
    <property type="reaction ID" value="UER00165"/>
</dbReference>
<dbReference type="GO" id="GO:0000287">
    <property type="term" value="F:magnesium ion binding"/>
    <property type="evidence" value="ECO:0007669"/>
    <property type="project" value="UniProtKB-UniRule"/>
</dbReference>
<dbReference type="GO" id="GO:0043748">
    <property type="term" value="F:O-succinylbenzoate synthase activity"/>
    <property type="evidence" value="ECO:0007669"/>
    <property type="project" value="UniProtKB-EC"/>
</dbReference>
<dbReference type="GO" id="GO:0009234">
    <property type="term" value="P:menaquinone biosynthetic process"/>
    <property type="evidence" value="ECO:0007669"/>
    <property type="project" value="UniProtKB-UniRule"/>
</dbReference>
<dbReference type="CDD" id="cd03320">
    <property type="entry name" value="OSBS"/>
    <property type="match status" value="1"/>
</dbReference>
<dbReference type="Gene3D" id="3.20.20.120">
    <property type="entry name" value="Enolase-like C-terminal domain"/>
    <property type="match status" value="1"/>
</dbReference>
<dbReference type="HAMAP" id="MF_00470">
    <property type="entry name" value="MenC_1"/>
    <property type="match status" value="1"/>
</dbReference>
<dbReference type="InterPro" id="IPR036849">
    <property type="entry name" value="Enolase-like_C_sf"/>
</dbReference>
<dbReference type="InterPro" id="IPR029065">
    <property type="entry name" value="Enolase_C-like"/>
</dbReference>
<dbReference type="InterPro" id="IPR013342">
    <property type="entry name" value="Mandelate_racemase_C"/>
</dbReference>
<dbReference type="InterPro" id="IPR010196">
    <property type="entry name" value="OSB_synthase_MenC1"/>
</dbReference>
<dbReference type="NCBIfam" id="NF002782">
    <property type="entry name" value="PRK02901.1"/>
    <property type="match status" value="1"/>
</dbReference>
<dbReference type="PANTHER" id="PTHR48073:SF2">
    <property type="entry name" value="O-SUCCINYLBENZOATE SYNTHASE"/>
    <property type="match status" value="1"/>
</dbReference>
<dbReference type="PANTHER" id="PTHR48073">
    <property type="entry name" value="O-SUCCINYLBENZOATE SYNTHASE-RELATED"/>
    <property type="match status" value="1"/>
</dbReference>
<dbReference type="Pfam" id="PF18374">
    <property type="entry name" value="Enolase_like_N"/>
    <property type="match status" value="1"/>
</dbReference>
<dbReference type="Pfam" id="PF13378">
    <property type="entry name" value="MR_MLE_C"/>
    <property type="match status" value="1"/>
</dbReference>
<dbReference type="SFLD" id="SFLDG00180">
    <property type="entry name" value="muconate_cycloisomerase"/>
    <property type="match status" value="1"/>
</dbReference>
<dbReference type="SFLD" id="SFLDF00009">
    <property type="entry name" value="o-succinylbenzoate_synthase"/>
    <property type="match status" value="1"/>
</dbReference>
<dbReference type="SMART" id="SM00922">
    <property type="entry name" value="MR_MLE"/>
    <property type="match status" value="1"/>
</dbReference>
<dbReference type="SUPFAM" id="SSF51604">
    <property type="entry name" value="Enolase C-terminal domain-like"/>
    <property type="match status" value="1"/>
</dbReference>
<name>MENC_MYCBT</name>
<sequence>MIPVLPPLEALLDRLYVVALPMRVRFRGITTREVALIEGPAGWGEFGAFVEYQSAQACAWLASAIETAYCAPPPVRRDRVPINATVPAVAAAQVGEVLARFPGARTAKVKVAEPGQSLADDIERVNAVRELVPMVRVDANGGWGVAEAVAAAAALTADGPLEYLEQPCATVAELAELRRRVDVPIAADESIRKAEDPLAVVRAQAADIAVLKVAPLGGISALLDIAARIAVPVVVSSALDSAVGIAAGLTAAAALPELDHACGLGTGGLFEEDVAEPAAPVDGFLAVARTTPDPARLQALGAPPQRRQWWIDRVKACYSLLVPSFG</sequence>
<proteinExistence type="inferred from homology"/>
<organism>
    <name type="scientific">Mycobacterium bovis (strain BCG / Tokyo 172 / ATCC 35737 / TMC 1019)</name>
    <dbReference type="NCBI Taxonomy" id="561275"/>
    <lineage>
        <taxon>Bacteria</taxon>
        <taxon>Bacillati</taxon>
        <taxon>Actinomycetota</taxon>
        <taxon>Actinomycetes</taxon>
        <taxon>Mycobacteriales</taxon>
        <taxon>Mycobacteriaceae</taxon>
        <taxon>Mycobacterium</taxon>
        <taxon>Mycobacterium tuberculosis complex</taxon>
    </lineage>
</organism>